<protein>
    <recommendedName>
        <fullName evidence="4">Nitrate import permease protein NrtB</fullName>
    </recommendedName>
</protein>
<proteinExistence type="inferred from homology"/>
<name>NRTB_SYNY3</name>
<keyword id="KW-0997">Cell inner membrane</keyword>
<keyword id="KW-1003">Cell membrane</keyword>
<keyword id="KW-0406">Ion transport</keyword>
<keyword id="KW-0472">Membrane</keyword>
<keyword id="KW-0534">Nitrate assimilation</keyword>
<keyword id="KW-1185">Reference proteome</keyword>
<keyword id="KW-0812">Transmembrane</keyword>
<keyword id="KW-1133">Transmembrane helix</keyword>
<keyword id="KW-0813">Transport</keyword>
<gene>
    <name type="primary">nrtB</name>
    <name type="ordered locus">sll1451</name>
</gene>
<reference key="1">
    <citation type="journal article" date="1996" name="DNA Res.">
        <title>Sequence analysis of the genome of the unicellular cyanobacterium Synechocystis sp. strain PCC6803. II. Sequence determination of the entire genome and assignment of potential protein-coding regions.</title>
        <authorList>
            <person name="Kaneko T."/>
            <person name="Sato S."/>
            <person name="Kotani H."/>
            <person name="Tanaka A."/>
            <person name="Asamizu E."/>
            <person name="Nakamura Y."/>
            <person name="Miyajima N."/>
            <person name="Hirosawa M."/>
            <person name="Sugiura M."/>
            <person name="Sasamoto S."/>
            <person name="Kimura T."/>
            <person name="Hosouchi T."/>
            <person name="Matsuno A."/>
            <person name="Muraki A."/>
            <person name="Nakazaki N."/>
            <person name="Naruo K."/>
            <person name="Okumura S."/>
            <person name="Shimpo S."/>
            <person name="Takeuchi C."/>
            <person name="Wada T."/>
            <person name="Watanabe A."/>
            <person name="Yamada M."/>
            <person name="Yasuda M."/>
            <person name="Tabata S."/>
        </authorList>
    </citation>
    <scope>NUCLEOTIDE SEQUENCE [LARGE SCALE GENOMIC DNA]</scope>
    <source>
        <strain>ATCC 27184 / PCC 6803 / Kazusa</strain>
    </source>
</reference>
<dbReference type="EMBL" id="BA000022">
    <property type="protein sequence ID" value="BAA17491.1"/>
    <property type="molecule type" value="Genomic_DNA"/>
</dbReference>
<dbReference type="PIR" id="S77388">
    <property type="entry name" value="S77388"/>
</dbReference>
<dbReference type="SMR" id="P73451"/>
<dbReference type="FunCoup" id="P73451">
    <property type="interactions" value="225"/>
</dbReference>
<dbReference type="STRING" id="1148.gene:10498356"/>
<dbReference type="PaxDb" id="1148-1652570"/>
<dbReference type="EnsemblBacteria" id="BAA17491">
    <property type="protein sequence ID" value="BAA17491"/>
    <property type="gene ID" value="BAA17491"/>
</dbReference>
<dbReference type="KEGG" id="syn:sll1451"/>
<dbReference type="eggNOG" id="COG0600">
    <property type="taxonomic scope" value="Bacteria"/>
</dbReference>
<dbReference type="InParanoid" id="P73451"/>
<dbReference type="PhylomeDB" id="P73451"/>
<dbReference type="Proteomes" id="UP000001425">
    <property type="component" value="Chromosome"/>
</dbReference>
<dbReference type="GO" id="GO:0005886">
    <property type="term" value="C:plasma membrane"/>
    <property type="evidence" value="ECO:0000318"/>
    <property type="project" value="GO_Central"/>
</dbReference>
<dbReference type="GO" id="GO:0015112">
    <property type="term" value="F:nitrate transmembrane transporter activity"/>
    <property type="evidence" value="ECO:0007669"/>
    <property type="project" value="InterPro"/>
</dbReference>
<dbReference type="GO" id="GO:0006811">
    <property type="term" value="P:monoatomic ion transport"/>
    <property type="evidence" value="ECO:0007669"/>
    <property type="project" value="UniProtKB-KW"/>
</dbReference>
<dbReference type="GO" id="GO:0042128">
    <property type="term" value="P:nitrate assimilation"/>
    <property type="evidence" value="ECO:0007669"/>
    <property type="project" value="UniProtKB-KW"/>
</dbReference>
<dbReference type="CDD" id="cd06261">
    <property type="entry name" value="TM_PBP2"/>
    <property type="match status" value="1"/>
</dbReference>
<dbReference type="FunFam" id="1.10.3720.10:FF:000003">
    <property type="entry name" value="Aliphatic sulfonate ABC transporter permease"/>
    <property type="match status" value="1"/>
</dbReference>
<dbReference type="Gene3D" id="1.10.3720.10">
    <property type="entry name" value="MetI-like"/>
    <property type="match status" value="1"/>
</dbReference>
<dbReference type="InterPro" id="IPR000515">
    <property type="entry name" value="MetI-like"/>
</dbReference>
<dbReference type="InterPro" id="IPR035906">
    <property type="entry name" value="MetI-like_sf"/>
</dbReference>
<dbReference type="InterPro" id="IPR005889">
    <property type="entry name" value="NtrB"/>
</dbReference>
<dbReference type="NCBIfam" id="TIGR01183">
    <property type="entry name" value="ntrB"/>
    <property type="match status" value="1"/>
</dbReference>
<dbReference type="PANTHER" id="PTHR30151">
    <property type="entry name" value="ALKANE SULFONATE ABC TRANSPORTER-RELATED, MEMBRANE SUBUNIT"/>
    <property type="match status" value="1"/>
</dbReference>
<dbReference type="PANTHER" id="PTHR30151:SF7">
    <property type="entry name" value="NITRATE IMPORT PERMEASE PROTEIN NRTB"/>
    <property type="match status" value="1"/>
</dbReference>
<dbReference type="Pfam" id="PF00528">
    <property type="entry name" value="BPD_transp_1"/>
    <property type="match status" value="1"/>
</dbReference>
<dbReference type="SUPFAM" id="SSF161098">
    <property type="entry name" value="MetI-like"/>
    <property type="match status" value="1"/>
</dbReference>
<dbReference type="PROSITE" id="PS50928">
    <property type="entry name" value="ABC_TM1"/>
    <property type="match status" value="1"/>
</dbReference>
<accession>P73451</accession>
<evidence type="ECO:0000250" key="1">
    <source>
        <dbReference type="UniProtKB" id="P38044"/>
    </source>
</evidence>
<evidence type="ECO:0000255" key="2"/>
<evidence type="ECO:0000255" key="3">
    <source>
        <dbReference type="PROSITE-ProRule" id="PRU00441"/>
    </source>
</evidence>
<evidence type="ECO:0000305" key="4"/>
<comment type="function">
    <text evidence="1">Part of the ABC transporter complex NrtABCD involved in nitrate uptake. The complex is probably also involved in nitrite transport. Probably responsible for the translocation of the substrate across the membrane.</text>
</comment>
<comment type="subunit">
    <text evidence="1">The complex is composed of two ATP-binding proteins (NrtC and NrtD), two transmembrane proteins (NrtB) and a solute-binding protein (NrtA).</text>
</comment>
<comment type="subcellular location">
    <subcellularLocation>
        <location evidence="1">Cell inner membrane</location>
        <topology evidence="2">Multi-pass membrane protein</topology>
    </subcellularLocation>
</comment>
<comment type="similarity">
    <text evidence="4">Belongs to the binding-protein-dependent transport system permease family. CysTW subfamily.</text>
</comment>
<sequence>MASSTAGLRPRRKKNPLSFIYSPKVIRPAVAIAVLLVVWQILCSGEGSNLPSPVQVLEQTYPLILNPFFDNGGTDKGLGIQIFASLTRVAVGFSAAAVVGIALGILIGSSKFMYDALDPIFQVLRTIPPLAWLPIALAALQEAEPSAIFVIFITAIWPIVINTTVGAQQVPQDYRNVSRVLKLSKSQYFFNILFPAAVPYIFTGLRIGIGLSWLAIVAAEMLIGGVGIGFFIWDAYNSSLISEIIIALIYVGIVGLLLDRFIAFLESLVVPAEQK</sequence>
<feature type="chain" id="PRO_0000060127" description="Nitrate import permease protein NrtB">
    <location>
        <begin position="1"/>
        <end position="275"/>
    </location>
</feature>
<feature type="transmembrane region" description="Helical" evidence="2">
    <location>
        <begin position="25"/>
        <end position="45"/>
    </location>
</feature>
<feature type="transmembrane region" description="Helical" evidence="2">
    <location>
        <begin position="89"/>
        <end position="109"/>
    </location>
</feature>
<feature type="transmembrane region" description="Helical" evidence="2">
    <location>
        <begin position="120"/>
        <end position="140"/>
    </location>
</feature>
<feature type="transmembrane region" description="Helical" evidence="2">
    <location>
        <begin position="147"/>
        <end position="167"/>
    </location>
</feature>
<feature type="transmembrane region" description="Helical" evidence="2">
    <location>
        <begin position="189"/>
        <end position="209"/>
    </location>
</feature>
<feature type="transmembrane region" description="Helical" evidence="2">
    <location>
        <begin position="213"/>
        <end position="233"/>
    </location>
</feature>
<feature type="transmembrane region" description="Helical" evidence="2">
    <location>
        <begin position="238"/>
        <end position="258"/>
    </location>
</feature>
<feature type="domain" description="ABC transmembrane type-1" evidence="3">
    <location>
        <begin position="82"/>
        <end position="262"/>
    </location>
</feature>
<organism>
    <name type="scientific">Synechocystis sp. (strain ATCC 27184 / PCC 6803 / Kazusa)</name>
    <dbReference type="NCBI Taxonomy" id="1111708"/>
    <lineage>
        <taxon>Bacteria</taxon>
        <taxon>Bacillati</taxon>
        <taxon>Cyanobacteriota</taxon>
        <taxon>Cyanophyceae</taxon>
        <taxon>Synechococcales</taxon>
        <taxon>Merismopediaceae</taxon>
        <taxon>Synechocystis</taxon>
    </lineage>
</organism>